<comment type="function">
    <text evidence="1">Catalyzes the oxidation of malonate semialdehyde (MSA) and methylmalonate semialdehyde (MMSA) into acetyl-CoA and propanoyl-CoA, respectively. Is involved in a myo-inositol catabolic pathway. Bicarbonate, and not CO2, is the end-product of the enzymatic reaction.</text>
</comment>
<comment type="catalytic activity">
    <reaction evidence="1">
        <text>3-oxopropanoate + NAD(+) + CoA + H2O = hydrogencarbonate + acetyl-CoA + NADH + H(+)</text>
        <dbReference type="Rhea" id="RHEA:76615"/>
        <dbReference type="ChEBI" id="CHEBI:15377"/>
        <dbReference type="ChEBI" id="CHEBI:15378"/>
        <dbReference type="ChEBI" id="CHEBI:17544"/>
        <dbReference type="ChEBI" id="CHEBI:33190"/>
        <dbReference type="ChEBI" id="CHEBI:57287"/>
        <dbReference type="ChEBI" id="CHEBI:57288"/>
        <dbReference type="ChEBI" id="CHEBI:57540"/>
        <dbReference type="ChEBI" id="CHEBI:57945"/>
        <dbReference type="EC" id="1.2.1.27"/>
    </reaction>
    <physiologicalReaction direction="left-to-right" evidence="1">
        <dbReference type="Rhea" id="RHEA:76616"/>
    </physiologicalReaction>
</comment>
<comment type="catalytic activity">
    <reaction evidence="1">
        <text>2-methyl-3-oxopropanoate + NAD(+) + CoA + H2O = propanoyl-CoA + hydrogencarbonate + NADH + H(+)</text>
        <dbReference type="Rhea" id="RHEA:20804"/>
        <dbReference type="ChEBI" id="CHEBI:15377"/>
        <dbReference type="ChEBI" id="CHEBI:15378"/>
        <dbReference type="ChEBI" id="CHEBI:17544"/>
        <dbReference type="ChEBI" id="CHEBI:57287"/>
        <dbReference type="ChEBI" id="CHEBI:57392"/>
        <dbReference type="ChEBI" id="CHEBI:57540"/>
        <dbReference type="ChEBI" id="CHEBI:57700"/>
        <dbReference type="ChEBI" id="CHEBI:57945"/>
        <dbReference type="EC" id="1.2.1.27"/>
    </reaction>
    <physiologicalReaction direction="left-to-right" evidence="1">
        <dbReference type="Rhea" id="RHEA:20805"/>
    </physiologicalReaction>
</comment>
<comment type="pathway">
    <text evidence="1">Polyol metabolism; myo-inositol degradation into acetyl-CoA; acetyl-CoA from myo-inositol: step 7/7.</text>
</comment>
<comment type="subunit">
    <text evidence="1">Homotetramer.</text>
</comment>
<comment type="similarity">
    <text evidence="1">Belongs to the aldehyde dehydrogenase family. IolA subfamily.</text>
</comment>
<name>IOLA_BACC1</name>
<feature type="chain" id="PRO_0000352320" description="Malonate-semialdehyde dehydrogenase">
    <location>
        <begin position="1"/>
        <end position="486"/>
    </location>
</feature>
<feature type="active site" description="Nucleophile" evidence="1">
    <location>
        <position position="286"/>
    </location>
</feature>
<feature type="binding site" evidence="1">
    <location>
        <position position="154"/>
    </location>
    <ligand>
        <name>NAD(+)</name>
        <dbReference type="ChEBI" id="CHEBI:57540"/>
    </ligand>
</feature>
<feature type="binding site" evidence="1">
    <location>
        <position position="178"/>
    </location>
    <ligand>
        <name>NAD(+)</name>
        <dbReference type="ChEBI" id="CHEBI:57540"/>
    </ligand>
</feature>
<feature type="binding site" evidence="1">
    <location>
        <position position="181"/>
    </location>
    <ligand>
        <name>NAD(+)</name>
        <dbReference type="ChEBI" id="CHEBI:57540"/>
    </ligand>
</feature>
<feature type="binding site" evidence="1">
    <location>
        <position position="182"/>
    </location>
    <ligand>
        <name>NAD(+)</name>
        <dbReference type="ChEBI" id="CHEBI:57540"/>
    </ligand>
</feature>
<feature type="binding site" evidence="1">
    <location>
        <position position="231"/>
    </location>
    <ligand>
        <name>NAD(+)</name>
        <dbReference type="ChEBI" id="CHEBI:57540"/>
    </ligand>
</feature>
<feature type="binding site" evidence="1">
    <location>
        <position position="386"/>
    </location>
    <ligand>
        <name>NAD(+)</name>
        <dbReference type="ChEBI" id="CHEBI:57540"/>
    </ligand>
</feature>
<reference key="1">
    <citation type="journal article" date="2004" name="Nucleic Acids Res.">
        <title>The genome sequence of Bacillus cereus ATCC 10987 reveals metabolic adaptations and a large plasmid related to Bacillus anthracis pXO1.</title>
        <authorList>
            <person name="Rasko D.A."/>
            <person name="Ravel J."/>
            <person name="Oekstad O.A."/>
            <person name="Helgason E."/>
            <person name="Cer R.Z."/>
            <person name="Jiang L."/>
            <person name="Shores K.A."/>
            <person name="Fouts D.E."/>
            <person name="Tourasse N.J."/>
            <person name="Angiuoli S.V."/>
            <person name="Kolonay J.F."/>
            <person name="Nelson W.C."/>
            <person name="Kolstoe A.-B."/>
            <person name="Fraser C.M."/>
            <person name="Read T.D."/>
        </authorList>
    </citation>
    <scope>NUCLEOTIDE SEQUENCE [LARGE SCALE GENOMIC DNA]</scope>
    <source>
        <strain>ATCC 10987 / NRS 248</strain>
    </source>
</reference>
<dbReference type="EC" id="1.2.1.27" evidence="1"/>
<dbReference type="EMBL" id="AE017194">
    <property type="protein sequence ID" value="AAS41300.1"/>
    <property type="molecule type" value="Genomic_DNA"/>
</dbReference>
<dbReference type="SMR" id="Q738L2"/>
<dbReference type="KEGG" id="bca:BCE_2382"/>
<dbReference type="HOGENOM" id="CLU_005391_1_10_9"/>
<dbReference type="UniPathway" id="UPA00076">
    <property type="reaction ID" value="UER00148"/>
</dbReference>
<dbReference type="Proteomes" id="UP000002527">
    <property type="component" value="Chromosome"/>
</dbReference>
<dbReference type="GO" id="GO:0018478">
    <property type="term" value="F:malonate-semialdehyde dehydrogenase (acetylating) activity"/>
    <property type="evidence" value="ECO:0007669"/>
    <property type="project" value="UniProtKB-UniRule"/>
</dbReference>
<dbReference type="GO" id="GO:0004491">
    <property type="term" value="F:methylmalonate-semialdehyde dehydrogenase (acylating, NAD) activity"/>
    <property type="evidence" value="ECO:0007669"/>
    <property type="project" value="UniProtKB-UniRule"/>
</dbReference>
<dbReference type="GO" id="GO:0019310">
    <property type="term" value="P:inositol catabolic process"/>
    <property type="evidence" value="ECO:0007669"/>
    <property type="project" value="UniProtKB-UniRule"/>
</dbReference>
<dbReference type="GO" id="GO:0006210">
    <property type="term" value="P:thymine catabolic process"/>
    <property type="evidence" value="ECO:0007669"/>
    <property type="project" value="TreeGrafter"/>
</dbReference>
<dbReference type="GO" id="GO:0006574">
    <property type="term" value="P:valine catabolic process"/>
    <property type="evidence" value="ECO:0007669"/>
    <property type="project" value="TreeGrafter"/>
</dbReference>
<dbReference type="CDD" id="cd07085">
    <property type="entry name" value="ALDH_F6_MMSDH"/>
    <property type="match status" value="1"/>
</dbReference>
<dbReference type="FunFam" id="3.40.309.10:FF:000002">
    <property type="entry name" value="Methylmalonate-semialdehyde dehydrogenase (Acylating)"/>
    <property type="match status" value="1"/>
</dbReference>
<dbReference type="FunFam" id="3.40.605.10:FF:000003">
    <property type="entry name" value="Methylmalonate-semialdehyde dehydrogenase [acylating]"/>
    <property type="match status" value="1"/>
</dbReference>
<dbReference type="Gene3D" id="3.40.605.10">
    <property type="entry name" value="Aldehyde Dehydrogenase, Chain A, domain 1"/>
    <property type="match status" value="1"/>
</dbReference>
<dbReference type="Gene3D" id="3.40.309.10">
    <property type="entry name" value="Aldehyde Dehydrogenase, Chain A, domain 2"/>
    <property type="match status" value="1"/>
</dbReference>
<dbReference type="HAMAP" id="MF_01670">
    <property type="entry name" value="IolA"/>
    <property type="match status" value="1"/>
</dbReference>
<dbReference type="InterPro" id="IPR016161">
    <property type="entry name" value="Ald_DH/histidinol_DH"/>
</dbReference>
<dbReference type="InterPro" id="IPR016163">
    <property type="entry name" value="Ald_DH_C"/>
</dbReference>
<dbReference type="InterPro" id="IPR016160">
    <property type="entry name" value="Ald_DH_CS_CYS"/>
</dbReference>
<dbReference type="InterPro" id="IPR016162">
    <property type="entry name" value="Ald_DH_N"/>
</dbReference>
<dbReference type="InterPro" id="IPR015590">
    <property type="entry name" value="Aldehyde_DH_dom"/>
</dbReference>
<dbReference type="InterPro" id="IPR010061">
    <property type="entry name" value="MeMal-semiAld_DH"/>
</dbReference>
<dbReference type="InterPro" id="IPR023510">
    <property type="entry name" value="MSDH_GmP_bac"/>
</dbReference>
<dbReference type="NCBIfam" id="TIGR01722">
    <property type="entry name" value="MMSDH"/>
    <property type="match status" value="1"/>
</dbReference>
<dbReference type="PANTHER" id="PTHR43866">
    <property type="entry name" value="MALONATE-SEMIALDEHYDE DEHYDROGENASE"/>
    <property type="match status" value="1"/>
</dbReference>
<dbReference type="PANTHER" id="PTHR43866:SF4">
    <property type="entry name" value="MALONATE-SEMIALDEHYDE DEHYDROGENASE"/>
    <property type="match status" value="1"/>
</dbReference>
<dbReference type="Pfam" id="PF00171">
    <property type="entry name" value="Aldedh"/>
    <property type="match status" value="1"/>
</dbReference>
<dbReference type="SUPFAM" id="SSF53720">
    <property type="entry name" value="ALDH-like"/>
    <property type="match status" value="1"/>
</dbReference>
<dbReference type="PROSITE" id="PS00070">
    <property type="entry name" value="ALDEHYDE_DEHYDR_CYS"/>
    <property type="match status" value="1"/>
</dbReference>
<protein>
    <recommendedName>
        <fullName evidence="1">Malonate-semialdehyde dehydrogenase</fullName>
        <shortName evidence="1">MSA dehydrogenase</shortName>
        <ecNumber evidence="1">1.2.1.27</ecNumber>
    </recommendedName>
    <alternativeName>
        <fullName evidence="1">Methylmalonate-semialdehyde dehydrogenase</fullName>
        <shortName evidence="1">MMSA dehydrogenase</shortName>
        <shortName evidence="1">MSDH</shortName>
    </alternativeName>
</protein>
<proteinExistence type="inferred from homology"/>
<organism>
    <name type="scientific">Bacillus cereus (strain ATCC 10987 / NRS 248)</name>
    <dbReference type="NCBI Taxonomy" id="222523"/>
    <lineage>
        <taxon>Bacteria</taxon>
        <taxon>Bacillati</taxon>
        <taxon>Bacillota</taxon>
        <taxon>Bacilli</taxon>
        <taxon>Bacillales</taxon>
        <taxon>Bacillaceae</taxon>
        <taxon>Bacillus</taxon>
        <taxon>Bacillus cereus group</taxon>
    </lineage>
</organism>
<evidence type="ECO:0000255" key="1">
    <source>
        <dbReference type="HAMAP-Rule" id="MF_01670"/>
    </source>
</evidence>
<gene>
    <name evidence="1" type="primary">iolA</name>
    <name type="ordered locus">BCE_2382</name>
</gene>
<keyword id="KW-0520">NAD</keyword>
<keyword id="KW-0560">Oxidoreductase</keyword>
<sequence length="486" mass="52991">MITTEIKRVKNHINGEWVESTGTEVEAVPNPATGKIIAYVPLSPKEDVEKAVEAAKAAYETWSKVPVPNRSRQLYKYLQLLQENKEELAKIITLENGKTLTDATGEVQRGIEAVELATSTPNLMMGQALPNIASGIDGSIWRYPIGVVAGITPFNFPMMIPLWMFPLAIACGNTFVLKTSERTPLLAERLVELFYEAGFPKGVLNLVQGGKDVVNSILENKDIQAVSFVGSEPVARYVYETGTKHGKRVQALAGAKNHAIVMPDCNLEKTVQGVIGSAFASSGERCMACSVVAVVDEIADEFIDVLVAETKKLKVGDGFHEDNYVGPLIRESHKERVLGYINSGVADGATLLVDGRKIKEEVGDGYFVGATIFDGVNQEMKIWQDEIFAPVLSIVRVKDLEEGIKLTNQSKFANGAVIYTSNGKHAQTFRDNIDAGMIGVNVNVPAPMAFFAFAGNKASFFGDLGTNGTDGVQFYTRKKVVTERWF</sequence>
<accession>Q738L2</accession>